<proteinExistence type="inferred from homology"/>
<reference key="1">
    <citation type="journal article" date="1996" name="Science">
        <title>Complete genome sequence of the methanogenic archaeon, Methanococcus jannaschii.</title>
        <authorList>
            <person name="Bult C.J."/>
            <person name="White O."/>
            <person name="Olsen G.J."/>
            <person name="Zhou L."/>
            <person name="Fleischmann R.D."/>
            <person name="Sutton G.G."/>
            <person name="Blake J.A."/>
            <person name="FitzGerald L.M."/>
            <person name="Clayton R.A."/>
            <person name="Gocayne J.D."/>
            <person name="Kerlavage A.R."/>
            <person name="Dougherty B.A."/>
            <person name="Tomb J.-F."/>
            <person name="Adams M.D."/>
            <person name="Reich C.I."/>
            <person name="Overbeek R."/>
            <person name="Kirkness E.F."/>
            <person name="Weinstock K.G."/>
            <person name="Merrick J.M."/>
            <person name="Glodek A."/>
            <person name="Scott J.L."/>
            <person name="Geoghagen N.S.M."/>
            <person name="Weidman J.F."/>
            <person name="Fuhrmann J.L."/>
            <person name="Nguyen D."/>
            <person name="Utterback T.R."/>
            <person name="Kelley J.M."/>
            <person name="Peterson J.D."/>
            <person name="Sadow P.W."/>
            <person name="Hanna M.C."/>
            <person name="Cotton M.D."/>
            <person name="Roberts K.M."/>
            <person name="Hurst M.A."/>
            <person name="Kaine B.P."/>
            <person name="Borodovsky M."/>
            <person name="Klenk H.-P."/>
            <person name="Fraser C.M."/>
            <person name="Smith H.O."/>
            <person name="Woese C.R."/>
            <person name="Venter J.C."/>
        </authorList>
    </citation>
    <scope>NUCLEOTIDE SEQUENCE [LARGE SCALE GENOMIC DNA]</scope>
    <source>
        <strain>ATCC 43067 / DSM 2661 / JAL-1 / JCM 10045 / NBRC 100440</strain>
    </source>
</reference>
<accession>Q58841</accession>
<sequence length="257" mass="28908">MEKPVICRIKEIIEESPTVKTFVVDKDFDFKPGQFAMLWLPGVDEKPFGFSSKNSFSVARVGEFTKKMHELKEGDIIGVRGPYGTYFEPIGDKVLAVAGGIGAAPIITAVEEFSKQGIEITTILGARTKEELLFLDRFEKVSRLEICTDDGSFGFKGFTTEKMKEVLKEEKFDLIITCGPEIMMKKVVEIANEYNIPVQVSMERYMKCGIGICGQCCVDDEGLCVCKDGPVFWGDKLKFIREFGKYKRDASGKKIYY</sequence>
<gene>
    <name evidence="1" type="primary">pyrK</name>
    <name type="ordered locus">MJ1446</name>
</gene>
<organism>
    <name type="scientific">Methanocaldococcus jannaschii (strain ATCC 43067 / DSM 2661 / JAL-1 / JCM 10045 / NBRC 100440)</name>
    <name type="common">Methanococcus jannaschii</name>
    <dbReference type="NCBI Taxonomy" id="243232"/>
    <lineage>
        <taxon>Archaea</taxon>
        <taxon>Methanobacteriati</taxon>
        <taxon>Methanobacteriota</taxon>
        <taxon>Methanomada group</taxon>
        <taxon>Methanococci</taxon>
        <taxon>Methanococcales</taxon>
        <taxon>Methanocaldococcaceae</taxon>
        <taxon>Methanocaldococcus</taxon>
    </lineage>
</organism>
<dbReference type="EMBL" id="L77117">
    <property type="protein sequence ID" value="AAB99455.1"/>
    <property type="molecule type" value="Genomic_DNA"/>
</dbReference>
<dbReference type="PIR" id="E64480">
    <property type="entry name" value="E64480"/>
</dbReference>
<dbReference type="RefSeq" id="WP_010870966.1">
    <property type="nucleotide sequence ID" value="NC_000909.1"/>
</dbReference>
<dbReference type="SMR" id="Q58841"/>
<dbReference type="FunCoup" id="Q58841">
    <property type="interactions" value="113"/>
</dbReference>
<dbReference type="STRING" id="243232.MJ_1446"/>
<dbReference type="PaxDb" id="243232-MJ_1446"/>
<dbReference type="DNASU" id="1452350"/>
<dbReference type="EnsemblBacteria" id="AAB99455">
    <property type="protein sequence ID" value="AAB99455"/>
    <property type="gene ID" value="MJ_1446"/>
</dbReference>
<dbReference type="GeneID" id="1452350"/>
<dbReference type="KEGG" id="mja:MJ_1446"/>
<dbReference type="eggNOG" id="arCOG02199">
    <property type="taxonomic scope" value="Archaea"/>
</dbReference>
<dbReference type="HOGENOM" id="CLU_003827_1_1_2"/>
<dbReference type="InParanoid" id="Q58841"/>
<dbReference type="OrthoDB" id="35401at2157"/>
<dbReference type="PhylomeDB" id="Q58841"/>
<dbReference type="UniPathway" id="UPA00070">
    <property type="reaction ID" value="UER00945"/>
</dbReference>
<dbReference type="Proteomes" id="UP000000805">
    <property type="component" value="Chromosome"/>
</dbReference>
<dbReference type="GO" id="GO:0051537">
    <property type="term" value="F:2 iron, 2 sulfur cluster binding"/>
    <property type="evidence" value="ECO:0007669"/>
    <property type="project" value="UniProtKB-KW"/>
</dbReference>
<dbReference type="GO" id="GO:0009055">
    <property type="term" value="F:electron transfer activity"/>
    <property type="evidence" value="ECO:0007669"/>
    <property type="project" value="UniProtKB-UniRule"/>
</dbReference>
<dbReference type="GO" id="GO:0050660">
    <property type="term" value="F:flavin adenine dinucleotide binding"/>
    <property type="evidence" value="ECO:0007669"/>
    <property type="project" value="InterPro"/>
</dbReference>
<dbReference type="GO" id="GO:0046872">
    <property type="term" value="F:metal ion binding"/>
    <property type="evidence" value="ECO:0007669"/>
    <property type="project" value="UniProtKB-KW"/>
</dbReference>
<dbReference type="GO" id="GO:0016491">
    <property type="term" value="F:oxidoreductase activity"/>
    <property type="evidence" value="ECO:0007669"/>
    <property type="project" value="InterPro"/>
</dbReference>
<dbReference type="GO" id="GO:0044205">
    <property type="term" value="P:'de novo' UMP biosynthetic process"/>
    <property type="evidence" value="ECO:0007669"/>
    <property type="project" value="UniProtKB-UniRule"/>
</dbReference>
<dbReference type="CDD" id="cd06220">
    <property type="entry name" value="DHOD_e_trans_like2"/>
    <property type="match status" value="1"/>
</dbReference>
<dbReference type="Gene3D" id="2.10.240.10">
    <property type="entry name" value="Dihydroorotate dehydrogenase, electron transfer subunit"/>
    <property type="match status" value="1"/>
</dbReference>
<dbReference type="Gene3D" id="3.40.50.80">
    <property type="entry name" value="Nucleotide-binding domain of ferredoxin-NADP reductase (FNR) module"/>
    <property type="match status" value="1"/>
</dbReference>
<dbReference type="Gene3D" id="2.40.30.10">
    <property type="entry name" value="Translation factors"/>
    <property type="match status" value="1"/>
</dbReference>
<dbReference type="HAMAP" id="MF_01211">
    <property type="entry name" value="DHODB_Fe_S_bind"/>
    <property type="match status" value="1"/>
</dbReference>
<dbReference type="InterPro" id="IPR012165">
    <property type="entry name" value="Cyt_c3_hydrogenase_gsu"/>
</dbReference>
<dbReference type="InterPro" id="IPR037117">
    <property type="entry name" value="Dihydroorotate_DH_ele_sf"/>
</dbReference>
<dbReference type="InterPro" id="IPR019480">
    <property type="entry name" value="Dihydroorotate_DH_Fe-S-bd"/>
</dbReference>
<dbReference type="InterPro" id="IPR023455">
    <property type="entry name" value="Dihydroorotate_DHASE_ETsu"/>
</dbReference>
<dbReference type="InterPro" id="IPR017927">
    <property type="entry name" value="FAD-bd_FR_type"/>
</dbReference>
<dbReference type="InterPro" id="IPR039261">
    <property type="entry name" value="FNR_nucleotide-bd"/>
</dbReference>
<dbReference type="InterPro" id="IPR001433">
    <property type="entry name" value="OxRdtase_FAD/NAD-bd"/>
</dbReference>
<dbReference type="InterPro" id="IPR050353">
    <property type="entry name" value="PyrK_electron_transfer"/>
</dbReference>
<dbReference type="InterPro" id="IPR017938">
    <property type="entry name" value="Riboflavin_synthase-like_b-brl"/>
</dbReference>
<dbReference type="NCBIfam" id="NF000796">
    <property type="entry name" value="PRK00054.1-1"/>
    <property type="match status" value="1"/>
</dbReference>
<dbReference type="PANTHER" id="PTHR43513">
    <property type="entry name" value="DIHYDROOROTATE DEHYDROGENASE B (NAD(+)), ELECTRON TRANSFER SUBUNIT"/>
    <property type="match status" value="1"/>
</dbReference>
<dbReference type="PANTHER" id="PTHR43513:SF3">
    <property type="entry name" value="DIHYDROOROTATE DEHYDROGENASE B (NAD(+)), ELECTRON TRANSFER SUBUNIT-RELATED"/>
    <property type="match status" value="1"/>
</dbReference>
<dbReference type="Pfam" id="PF10418">
    <property type="entry name" value="DHODB_Fe-S_bind"/>
    <property type="match status" value="1"/>
</dbReference>
<dbReference type="Pfam" id="PF00175">
    <property type="entry name" value="NAD_binding_1"/>
    <property type="match status" value="1"/>
</dbReference>
<dbReference type="PIRSF" id="PIRSF006816">
    <property type="entry name" value="Cyc3_hyd_g"/>
    <property type="match status" value="1"/>
</dbReference>
<dbReference type="SUPFAM" id="SSF52343">
    <property type="entry name" value="Ferredoxin reductase-like, C-terminal NADP-linked domain"/>
    <property type="match status" value="1"/>
</dbReference>
<dbReference type="SUPFAM" id="SSF63380">
    <property type="entry name" value="Riboflavin synthase domain-like"/>
    <property type="match status" value="1"/>
</dbReference>
<dbReference type="PROSITE" id="PS00197">
    <property type="entry name" value="2FE2S_FER_1"/>
    <property type="match status" value="1"/>
</dbReference>
<dbReference type="PROSITE" id="PS51384">
    <property type="entry name" value="FAD_FR"/>
    <property type="match status" value="1"/>
</dbReference>
<name>PYRK_METJA</name>
<evidence type="ECO:0000255" key="1">
    <source>
        <dbReference type="HAMAP-Rule" id="MF_01211"/>
    </source>
</evidence>
<feature type="chain" id="PRO_0000148375" description="Probable dihydroorotate dehydrogenase B (NAD(+)), electron transfer subunit">
    <location>
        <begin position="1"/>
        <end position="257"/>
    </location>
</feature>
<feature type="domain" description="FAD-binding FR-type" evidence="1">
    <location>
        <begin position="2"/>
        <end position="89"/>
    </location>
</feature>
<feature type="binding site" evidence="1">
    <location>
        <position position="208"/>
    </location>
    <ligand>
        <name>[2Fe-2S] cluster</name>
        <dbReference type="ChEBI" id="CHEBI:190135"/>
    </ligand>
</feature>
<feature type="binding site" evidence="1">
    <location>
        <position position="213"/>
    </location>
    <ligand>
        <name>[2Fe-2S] cluster</name>
        <dbReference type="ChEBI" id="CHEBI:190135"/>
    </ligand>
</feature>
<feature type="binding site" evidence="1">
    <location>
        <position position="216"/>
    </location>
    <ligand>
        <name>[2Fe-2S] cluster</name>
        <dbReference type="ChEBI" id="CHEBI:190135"/>
    </ligand>
</feature>
<feature type="binding site" evidence="1">
    <location>
        <position position="226"/>
    </location>
    <ligand>
        <name>[2Fe-2S] cluster</name>
        <dbReference type="ChEBI" id="CHEBI:190135"/>
    </ligand>
</feature>
<comment type="function">
    <text evidence="1">Responsible for channeling the electrons from the oxidation of dihydroorotate from the FMN redox center in the PyrD type B subunit to the ultimate electron acceptor NAD(+).</text>
</comment>
<comment type="cofactor">
    <cofactor evidence="1">
        <name>[2Fe-2S] cluster</name>
        <dbReference type="ChEBI" id="CHEBI:190135"/>
    </cofactor>
    <text evidence="1">Binds 1 [2Fe-2S] cluster per subunit.</text>
</comment>
<comment type="cofactor">
    <cofactor evidence="1">
        <name>FAD</name>
        <dbReference type="ChEBI" id="CHEBI:57692"/>
    </cofactor>
    <text evidence="1">Binds 1 FAD per subunit.</text>
</comment>
<comment type="pathway">
    <text evidence="1">Pyrimidine metabolism; UMP biosynthesis via de novo pathway; orotate from (S)-dihydroorotate (NAD(+) route): step 1/1.</text>
</comment>
<comment type="subunit">
    <text evidence="1">Heterotetramer of 2 PyrK and 2 PyrD type B subunits.</text>
</comment>
<comment type="similarity">
    <text evidence="1">Belongs to the PyrK family.</text>
</comment>
<protein>
    <recommendedName>
        <fullName evidence="1">Probable dihydroorotate dehydrogenase B (NAD(+)), electron transfer subunit</fullName>
    </recommendedName>
    <alternativeName>
        <fullName evidence="1">Dihydroorotate oxidase B, electron transfer subunit</fullName>
    </alternativeName>
</protein>
<keyword id="KW-0001">2Fe-2S</keyword>
<keyword id="KW-0249">Electron transport</keyword>
<keyword id="KW-0274">FAD</keyword>
<keyword id="KW-0285">Flavoprotein</keyword>
<keyword id="KW-0408">Iron</keyword>
<keyword id="KW-0411">Iron-sulfur</keyword>
<keyword id="KW-0479">Metal-binding</keyword>
<keyword id="KW-0665">Pyrimidine biosynthesis</keyword>
<keyword id="KW-1185">Reference proteome</keyword>
<keyword id="KW-0813">Transport</keyword>